<protein>
    <recommendedName>
        <fullName>Probable serine/threonine-protein kinase pXi</fullName>
        <ecNumber>2.7.11.1</ecNumber>
    </recommendedName>
</protein>
<feature type="chain" id="PRO_0000358891" description="Probable serine/threonine-protein kinase pXi">
    <location>
        <begin position="1"/>
        <end position="691"/>
    </location>
</feature>
<feature type="domain" description="Protein kinase" evidence="2">
    <location>
        <begin position="18"/>
        <end position="263"/>
    </location>
</feature>
<feature type="region of interest" description="Disordered" evidence="4">
    <location>
        <begin position="314"/>
        <end position="350"/>
    </location>
</feature>
<feature type="region of interest" description="Disordered" evidence="4">
    <location>
        <begin position="420"/>
        <end position="447"/>
    </location>
</feature>
<feature type="region of interest" description="Disordered" evidence="4">
    <location>
        <begin position="510"/>
        <end position="536"/>
    </location>
</feature>
<feature type="region of interest" description="Disordered" evidence="4">
    <location>
        <begin position="600"/>
        <end position="620"/>
    </location>
</feature>
<feature type="coiled-coil region" evidence="1">
    <location>
        <begin position="642"/>
        <end position="691"/>
    </location>
</feature>
<feature type="compositionally biased region" description="Low complexity" evidence="4">
    <location>
        <begin position="322"/>
        <end position="336"/>
    </location>
</feature>
<feature type="compositionally biased region" description="Basic and acidic residues" evidence="4">
    <location>
        <begin position="338"/>
        <end position="350"/>
    </location>
</feature>
<feature type="compositionally biased region" description="Low complexity" evidence="4">
    <location>
        <begin position="423"/>
        <end position="433"/>
    </location>
</feature>
<feature type="compositionally biased region" description="Low complexity" evidence="4">
    <location>
        <begin position="512"/>
        <end position="536"/>
    </location>
</feature>
<feature type="compositionally biased region" description="Low complexity" evidence="4">
    <location>
        <begin position="600"/>
        <end position="615"/>
    </location>
</feature>
<feature type="active site" description="Proton acceptor" evidence="2 3">
    <location>
        <position position="137"/>
    </location>
</feature>
<feature type="binding site" evidence="2">
    <location>
        <begin position="24"/>
        <end position="32"/>
    </location>
    <ligand>
        <name>ATP</name>
        <dbReference type="ChEBI" id="CHEBI:30616"/>
    </ligand>
</feature>
<feature type="binding site" evidence="2">
    <location>
        <position position="47"/>
    </location>
    <ligand>
        <name>ATP</name>
        <dbReference type="ChEBI" id="CHEBI:30616"/>
    </ligand>
</feature>
<feature type="sequence conflict" description="In Ref. 2; AAB07588." evidence="5" ref="2">
    <original>F</original>
    <variation>L</variation>
    <location>
        <position position="565"/>
    </location>
</feature>
<feature type="sequence conflict" description="In Ref. 2; AAB07588." evidence="5" ref="2">
    <original>K</original>
    <variation>E</variation>
    <location>
        <position position="691"/>
    </location>
</feature>
<name>PXI_DICDI</name>
<accession>Q1ZXC8</accession>
<accession>Q94492</accession>
<organism>
    <name type="scientific">Dictyostelium discoideum</name>
    <name type="common">Social amoeba</name>
    <dbReference type="NCBI Taxonomy" id="44689"/>
    <lineage>
        <taxon>Eukaryota</taxon>
        <taxon>Amoebozoa</taxon>
        <taxon>Evosea</taxon>
        <taxon>Eumycetozoa</taxon>
        <taxon>Dictyostelia</taxon>
        <taxon>Dictyosteliales</taxon>
        <taxon>Dictyosteliaceae</taxon>
        <taxon>Dictyostelium</taxon>
    </lineage>
</organism>
<gene>
    <name type="primary">pXi</name>
    <name type="ORF">DDB_G0289119</name>
</gene>
<evidence type="ECO:0000255" key="1"/>
<evidence type="ECO:0000255" key="2">
    <source>
        <dbReference type="PROSITE-ProRule" id="PRU00159"/>
    </source>
</evidence>
<evidence type="ECO:0000255" key="3">
    <source>
        <dbReference type="PROSITE-ProRule" id="PRU10027"/>
    </source>
</evidence>
<evidence type="ECO:0000256" key="4">
    <source>
        <dbReference type="SAM" id="MobiDB-lite"/>
    </source>
</evidence>
<evidence type="ECO:0000305" key="5"/>
<keyword id="KW-0067">ATP-binding</keyword>
<keyword id="KW-0175">Coiled coil</keyword>
<keyword id="KW-0418">Kinase</keyword>
<keyword id="KW-0547">Nucleotide-binding</keyword>
<keyword id="KW-1185">Reference proteome</keyword>
<keyword id="KW-0723">Serine/threonine-protein kinase</keyword>
<keyword id="KW-0808">Transferase</keyword>
<dbReference type="EC" id="2.7.11.1"/>
<dbReference type="EMBL" id="AAFI02000130">
    <property type="protein sequence ID" value="EAS66833.1"/>
    <property type="molecule type" value="Genomic_DNA"/>
</dbReference>
<dbReference type="EMBL" id="U67923">
    <property type="protein sequence ID" value="AAB07588.1"/>
    <property type="status" value="ALT_SEQ"/>
    <property type="molecule type" value="mRNA"/>
</dbReference>
<dbReference type="RefSeq" id="XP_001134516.1">
    <property type="nucleotide sequence ID" value="XM_001134516.1"/>
</dbReference>
<dbReference type="SMR" id="Q1ZXC8"/>
<dbReference type="FunCoup" id="Q1ZXC8">
    <property type="interactions" value="131"/>
</dbReference>
<dbReference type="STRING" id="44689.Q1ZXC8"/>
<dbReference type="PaxDb" id="44689-DDB0232940"/>
<dbReference type="EnsemblProtists" id="EAS66833">
    <property type="protein sequence ID" value="EAS66833"/>
    <property type="gene ID" value="DDB_G0289119"/>
</dbReference>
<dbReference type="GeneID" id="8626987"/>
<dbReference type="KEGG" id="ddi:DDB_G0289119"/>
<dbReference type="dictyBase" id="DDB_G0289119">
    <property type="gene designation" value="pXi"/>
</dbReference>
<dbReference type="VEuPathDB" id="AmoebaDB:DDB_G0289119"/>
<dbReference type="eggNOG" id="KOG0032">
    <property type="taxonomic scope" value="Eukaryota"/>
</dbReference>
<dbReference type="HOGENOM" id="CLU_398730_0_0_1"/>
<dbReference type="InParanoid" id="Q1ZXC8"/>
<dbReference type="OMA" id="TTMGHNK"/>
<dbReference type="PRO" id="PR:Q1ZXC8"/>
<dbReference type="Proteomes" id="UP000002195">
    <property type="component" value="Chromosome 5"/>
</dbReference>
<dbReference type="GO" id="GO:0005737">
    <property type="term" value="C:cytoplasm"/>
    <property type="evidence" value="ECO:0000318"/>
    <property type="project" value="GO_Central"/>
</dbReference>
<dbReference type="GO" id="GO:0005524">
    <property type="term" value="F:ATP binding"/>
    <property type="evidence" value="ECO:0007669"/>
    <property type="project" value="UniProtKB-KW"/>
</dbReference>
<dbReference type="GO" id="GO:0106310">
    <property type="term" value="F:protein serine kinase activity"/>
    <property type="evidence" value="ECO:0007669"/>
    <property type="project" value="RHEA"/>
</dbReference>
<dbReference type="GO" id="GO:0004674">
    <property type="term" value="F:protein serine/threonine kinase activity"/>
    <property type="evidence" value="ECO:0000318"/>
    <property type="project" value="GO_Central"/>
</dbReference>
<dbReference type="GO" id="GO:0007165">
    <property type="term" value="P:signal transduction"/>
    <property type="evidence" value="ECO:0000318"/>
    <property type="project" value="GO_Central"/>
</dbReference>
<dbReference type="CDD" id="cd05117">
    <property type="entry name" value="STKc_CAMK"/>
    <property type="match status" value="1"/>
</dbReference>
<dbReference type="FunFam" id="3.30.200.20:FF:000042">
    <property type="entry name" value="Aurora kinase A"/>
    <property type="match status" value="1"/>
</dbReference>
<dbReference type="FunFam" id="1.10.510.10:FF:000571">
    <property type="entry name" value="Maternal embryonic leucine zipper kinase"/>
    <property type="match status" value="1"/>
</dbReference>
<dbReference type="Gene3D" id="3.30.200.20">
    <property type="entry name" value="Phosphorylase Kinase, domain 1"/>
    <property type="match status" value="1"/>
</dbReference>
<dbReference type="Gene3D" id="1.10.510.10">
    <property type="entry name" value="Transferase(Phosphotransferase) domain 1"/>
    <property type="match status" value="1"/>
</dbReference>
<dbReference type="InterPro" id="IPR011009">
    <property type="entry name" value="Kinase-like_dom_sf"/>
</dbReference>
<dbReference type="InterPro" id="IPR000719">
    <property type="entry name" value="Prot_kinase_dom"/>
</dbReference>
<dbReference type="InterPro" id="IPR017441">
    <property type="entry name" value="Protein_kinase_ATP_BS"/>
</dbReference>
<dbReference type="InterPro" id="IPR008271">
    <property type="entry name" value="Ser/Thr_kinase_AS"/>
</dbReference>
<dbReference type="PANTHER" id="PTHR24347">
    <property type="entry name" value="SERINE/THREONINE-PROTEIN KINASE"/>
    <property type="match status" value="1"/>
</dbReference>
<dbReference type="Pfam" id="PF00069">
    <property type="entry name" value="Pkinase"/>
    <property type="match status" value="1"/>
</dbReference>
<dbReference type="SMART" id="SM00220">
    <property type="entry name" value="S_TKc"/>
    <property type="match status" value="1"/>
</dbReference>
<dbReference type="SUPFAM" id="SSF56112">
    <property type="entry name" value="Protein kinase-like (PK-like)"/>
    <property type="match status" value="1"/>
</dbReference>
<dbReference type="PROSITE" id="PS00107">
    <property type="entry name" value="PROTEIN_KINASE_ATP"/>
    <property type="match status" value="1"/>
</dbReference>
<dbReference type="PROSITE" id="PS50011">
    <property type="entry name" value="PROTEIN_KINASE_DOM"/>
    <property type="match status" value="1"/>
</dbReference>
<dbReference type="PROSITE" id="PS00108">
    <property type="entry name" value="PROTEIN_KINASE_ST"/>
    <property type="match status" value="1"/>
</dbReference>
<proteinExistence type="evidence at transcript level"/>
<reference key="1">
    <citation type="journal article" date="2005" name="Nature">
        <title>The genome of the social amoeba Dictyostelium discoideum.</title>
        <authorList>
            <person name="Eichinger L."/>
            <person name="Pachebat J.A."/>
            <person name="Gloeckner G."/>
            <person name="Rajandream M.A."/>
            <person name="Sucgang R."/>
            <person name="Berriman M."/>
            <person name="Song J."/>
            <person name="Olsen R."/>
            <person name="Szafranski K."/>
            <person name="Xu Q."/>
            <person name="Tunggal B."/>
            <person name="Kummerfeld S."/>
            <person name="Madera M."/>
            <person name="Konfortov B.A."/>
            <person name="Rivero F."/>
            <person name="Bankier A.T."/>
            <person name="Lehmann R."/>
            <person name="Hamlin N."/>
            <person name="Davies R."/>
            <person name="Gaudet P."/>
            <person name="Fey P."/>
            <person name="Pilcher K."/>
            <person name="Chen G."/>
            <person name="Saunders D."/>
            <person name="Sodergren E.J."/>
            <person name="Davis P."/>
            <person name="Kerhornou A."/>
            <person name="Nie X."/>
            <person name="Hall N."/>
            <person name="Anjard C."/>
            <person name="Hemphill L."/>
            <person name="Bason N."/>
            <person name="Farbrother P."/>
            <person name="Desany B."/>
            <person name="Just E."/>
            <person name="Morio T."/>
            <person name="Rost R."/>
            <person name="Churcher C.M."/>
            <person name="Cooper J."/>
            <person name="Haydock S."/>
            <person name="van Driessche N."/>
            <person name="Cronin A."/>
            <person name="Goodhead I."/>
            <person name="Muzny D.M."/>
            <person name="Mourier T."/>
            <person name="Pain A."/>
            <person name="Lu M."/>
            <person name="Harper D."/>
            <person name="Lindsay R."/>
            <person name="Hauser H."/>
            <person name="James K.D."/>
            <person name="Quiles M."/>
            <person name="Madan Babu M."/>
            <person name="Saito T."/>
            <person name="Buchrieser C."/>
            <person name="Wardroper A."/>
            <person name="Felder M."/>
            <person name="Thangavelu M."/>
            <person name="Johnson D."/>
            <person name="Knights A."/>
            <person name="Loulseged H."/>
            <person name="Mungall K.L."/>
            <person name="Oliver K."/>
            <person name="Price C."/>
            <person name="Quail M.A."/>
            <person name="Urushihara H."/>
            <person name="Hernandez J."/>
            <person name="Rabbinowitsch E."/>
            <person name="Steffen D."/>
            <person name="Sanders M."/>
            <person name="Ma J."/>
            <person name="Kohara Y."/>
            <person name="Sharp S."/>
            <person name="Simmonds M.N."/>
            <person name="Spiegler S."/>
            <person name="Tivey A."/>
            <person name="Sugano S."/>
            <person name="White B."/>
            <person name="Walker D."/>
            <person name="Woodward J.R."/>
            <person name="Winckler T."/>
            <person name="Tanaka Y."/>
            <person name="Shaulsky G."/>
            <person name="Schleicher M."/>
            <person name="Weinstock G.M."/>
            <person name="Rosenthal A."/>
            <person name="Cox E.C."/>
            <person name="Chisholm R.L."/>
            <person name="Gibbs R.A."/>
            <person name="Loomis W.F."/>
            <person name="Platzer M."/>
            <person name="Kay R.R."/>
            <person name="Williams J.G."/>
            <person name="Dear P.H."/>
            <person name="Noegel A.A."/>
            <person name="Barrell B.G."/>
            <person name="Kuspa A."/>
        </authorList>
    </citation>
    <scope>NUCLEOTIDE SEQUENCE [LARGE SCALE GENOMIC DNA]</scope>
    <source>
        <strain>AX4</strain>
    </source>
</reference>
<reference key="2">
    <citation type="submission" date="1996-08" db="EMBL/GenBank/DDBJ databases">
        <authorList>
            <person name="Balding K.M."/>
            <person name="Corrick C."/>
            <person name="Parish R.W."/>
        </authorList>
    </citation>
    <scope>NUCLEOTIDE SEQUENCE [MRNA] OF 465-691</scope>
</reference>
<sequence>MGKNIIAGSISSSIHKSYEIGSQIGNGKFAQVHSGTNKSTGKKSAIKIMKKSIVEESAIIKEIEMMTEINHQNIIKLQEVYETDNEVLLVLELVTGGELFDKIVEREFYTEQDASTLIGTVTKVIQYLHSKDIVHCDLKPENLLYSDNSDQAIIKLCDFGLSQRCGSGSPLRSLVGTLTYMAPEISSCTGYGKPVDLWSIGVISYILLCGFPPFDETTGYVLEFPSPEWDNISDSAKSLIKGLLNNDPSKRFTIDQTLKHPWIAGTTCGKNSIVGTLKTLREFNTLRRTNGGNTTMGHNKQSRSTVFELFPSLTPIKSNDENNNNNNNNNNNNNNNEILDKKSNENENENENDKIKINLELNLNNNVNNNNNNNNNTVILENNNNNLEKISTTKTTTTTSTINDSINKTKIQLMNSLDFENDSSSSETYSSSSPIENGGGGGDKFTSPELSSLSIDLGCASDQLNSDKEKIIEQLKNEKSLLQKELLEIKRQSPVPSPSSSFLNNHLQQQHNNNINNNNNNINNGGSTSINNGNGTIERQFRPIHMSKDSDSGSYENLLLGTSPFVKNHNNNNINNNNNNFCHSRNSSFGYGNSYNSSNGGSGCSSSSDESTGGSFKKDKSKYGVDRICLDLQSEFEKLSLPKETMDKLASVLSNYKQKNQEKSLKVKYEKQKDKYKKLKSQLKKDKSLLK</sequence>
<comment type="catalytic activity">
    <reaction>
        <text>L-seryl-[protein] + ATP = O-phospho-L-seryl-[protein] + ADP + H(+)</text>
        <dbReference type="Rhea" id="RHEA:17989"/>
        <dbReference type="Rhea" id="RHEA-COMP:9863"/>
        <dbReference type="Rhea" id="RHEA-COMP:11604"/>
        <dbReference type="ChEBI" id="CHEBI:15378"/>
        <dbReference type="ChEBI" id="CHEBI:29999"/>
        <dbReference type="ChEBI" id="CHEBI:30616"/>
        <dbReference type="ChEBI" id="CHEBI:83421"/>
        <dbReference type="ChEBI" id="CHEBI:456216"/>
        <dbReference type="EC" id="2.7.11.1"/>
    </reaction>
</comment>
<comment type="catalytic activity">
    <reaction>
        <text>L-threonyl-[protein] + ATP = O-phospho-L-threonyl-[protein] + ADP + H(+)</text>
        <dbReference type="Rhea" id="RHEA:46608"/>
        <dbReference type="Rhea" id="RHEA-COMP:11060"/>
        <dbReference type="Rhea" id="RHEA-COMP:11605"/>
        <dbReference type="ChEBI" id="CHEBI:15378"/>
        <dbReference type="ChEBI" id="CHEBI:30013"/>
        <dbReference type="ChEBI" id="CHEBI:30616"/>
        <dbReference type="ChEBI" id="CHEBI:61977"/>
        <dbReference type="ChEBI" id="CHEBI:456216"/>
        <dbReference type="EC" id="2.7.11.1"/>
    </reaction>
</comment>
<comment type="similarity">
    <text evidence="5">Belongs to the protein kinase superfamily. CAMK Ser/Thr protein kinase family.</text>
</comment>
<comment type="sequence caution" evidence="5">
    <conflict type="frameshift">
        <sequence resource="EMBL-CDS" id="AAB07588"/>
    </conflict>
</comment>
<comment type="sequence caution" evidence="5">
    <conflict type="miscellaneous discrepancy">
        <sequence resource="EMBL-CDS" id="AAB07588"/>
    </conflict>
    <text>Contaminating sequence. Sequence of unknown origin in the C-terminal part.</text>
</comment>